<reference key="1">
    <citation type="journal article" date="2006" name="Proc. Natl. Acad. Sci. U.S.A.">
        <title>The complete genome sequence of a chronic atrophic gastritis Helicobacter pylori strain: evolution during disease progression.</title>
        <authorList>
            <person name="Oh J.D."/>
            <person name="Kling-Baeckhed H."/>
            <person name="Giannakis M."/>
            <person name="Xu J."/>
            <person name="Fulton R.S."/>
            <person name="Fulton L.A."/>
            <person name="Cordum H.S."/>
            <person name="Wang C."/>
            <person name="Elliott G."/>
            <person name="Edwards J."/>
            <person name="Mardis E.R."/>
            <person name="Engstrand L.G."/>
            <person name="Gordon J.I."/>
        </authorList>
    </citation>
    <scope>NUCLEOTIDE SEQUENCE [LARGE SCALE GENOMIC DNA]</scope>
    <source>
        <strain>HPAG1</strain>
    </source>
</reference>
<proteinExistence type="inferred from homology"/>
<dbReference type="EMBL" id="CP000241">
    <property type="protein sequence ID" value="ABF85136.1"/>
    <property type="molecule type" value="Genomic_DNA"/>
</dbReference>
<dbReference type="RefSeq" id="WP_001196329.1">
    <property type="nucleotide sequence ID" value="NC_008086.1"/>
</dbReference>
<dbReference type="SMR" id="Q1CSD6"/>
<dbReference type="KEGG" id="hpa:HPAG1_1069"/>
<dbReference type="HOGENOM" id="CLU_084338_2_1_7"/>
<dbReference type="GO" id="GO:0005886">
    <property type="term" value="C:plasma membrane"/>
    <property type="evidence" value="ECO:0007669"/>
    <property type="project" value="UniProtKB-SubCell"/>
</dbReference>
<dbReference type="GO" id="GO:0045259">
    <property type="term" value="C:proton-transporting ATP synthase complex"/>
    <property type="evidence" value="ECO:0007669"/>
    <property type="project" value="UniProtKB-KW"/>
</dbReference>
<dbReference type="GO" id="GO:0005524">
    <property type="term" value="F:ATP binding"/>
    <property type="evidence" value="ECO:0007669"/>
    <property type="project" value="UniProtKB-UniRule"/>
</dbReference>
<dbReference type="GO" id="GO:0046933">
    <property type="term" value="F:proton-transporting ATP synthase activity, rotational mechanism"/>
    <property type="evidence" value="ECO:0007669"/>
    <property type="project" value="UniProtKB-UniRule"/>
</dbReference>
<dbReference type="CDD" id="cd12152">
    <property type="entry name" value="F1-ATPase_delta"/>
    <property type="match status" value="1"/>
</dbReference>
<dbReference type="FunFam" id="2.60.15.10:FF:000006">
    <property type="entry name" value="ATP synthase epsilon chain"/>
    <property type="match status" value="1"/>
</dbReference>
<dbReference type="Gene3D" id="2.60.15.10">
    <property type="entry name" value="F0F1 ATP synthase delta/epsilon subunit, N-terminal"/>
    <property type="match status" value="1"/>
</dbReference>
<dbReference type="HAMAP" id="MF_00530">
    <property type="entry name" value="ATP_synth_epsil_bac"/>
    <property type="match status" value="1"/>
</dbReference>
<dbReference type="InterPro" id="IPR001469">
    <property type="entry name" value="ATP_synth_F1_dsu/esu"/>
</dbReference>
<dbReference type="InterPro" id="IPR020546">
    <property type="entry name" value="ATP_synth_F1_dsu/esu_N"/>
</dbReference>
<dbReference type="InterPro" id="IPR036771">
    <property type="entry name" value="ATPsynth_dsu/esu_N"/>
</dbReference>
<dbReference type="NCBIfam" id="TIGR01216">
    <property type="entry name" value="ATP_synt_epsi"/>
    <property type="match status" value="1"/>
</dbReference>
<dbReference type="PANTHER" id="PTHR13822">
    <property type="entry name" value="ATP SYNTHASE DELTA/EPSILON CHAIN"/>
    <property type="match status" value="1"/>
</dbReference>
<dbReference type="PANTHER" id="PTHR13822:SF10">
    <property type="entry name" value="ATP SYNTHASE EPSILON CHAIN, CHLOROPLASTIC"/>
    <property type="match status" value="1"/>
</dbReference>
<dbReference type="Pfam" id="PF02823">
    <property type="entry name" value="ATP-synt_DE_N"/>
    <property type="match status" value="1"/>
</dbReference>
<dbReference type="SUPFAM" id="SSF51344">
    <property type="entry name" value="Epsilon subunit of F1F0-ATP synthase N-terminal domain"/>
    <property type="match status" value="1"/>
</dbReference>
<organism>
    <name type="scientific">Helicobacter pylori (strain HPAG1)</name>
    <dbReference type="NCBI Taxonomy" id="357544"/>
    <lineage>
        <taxon>Bacteria</taxon>
        <taxon>Pseudomonadati</taxon>
        <taxon>Campylobacterota</taxon>
        <taxon>Epsilonproteobacteria</taxon>
        <taxon>Campylobacterales</taxon>
        <taxon>Helicobacteraceae</taxon>
        <taxon>Helicobacter</taxon>
    </lineage>
</organism>
<protein>
    <recommendedName>
        <fullName evidence="1">ATP synthase epsilon chain</fullName>
    </recommendedName>
    <alternativeName>
        <fullName evidence="1">ATP synthase F1 sector epsilon subunit</fullName>
    </alternativeName>
    <alternativeName>
        <fullName evidence="1">F-ATPase epsilon subunit</fullName>
    </alternativeName>
</protein>
<name>ATPE_HELPH</name>
<evidence type="ECO:0000255" key="1">
    <source>
        <dbReference type="HAMAP-Rule" id="MF_00530"/>
    </source>
</evidence>
<keyword id="KW-0066">ATP synthesis</keyword>
<keyword id="KW-0997">Cell inner membrane</keyword>
<keyword id="KW-1003">Cell membrane</keyword>
<keyword id="KW-0139">CF(1)</keyword>
<keyword id="KW-0375">Hydrogen ion transport</keyword>
<keyword id="KW-0406">Ion transport</keyword>
<keyword id="KW-0472">Membrane</keyword>
<keyword id="KW-0813">Transport</keyword>
<sequence>MALLKISVVVPEGEVYTGEVKSVVLPGVEGEFGVLYGHSNMITLLQAGVVEIETENQKEHIAINWGYAEVTKERVDILADGAVFIKKESDDRDDAISRAKKLLEDASSDRLAVSSVLAKIESL</sequence>
<comment type="function">
    <text evidence="1">Produces ATP from ADP in the presence of a proton gradient across the membrane.</text>
</comment>
<comment type="subunit">
    <text>F-type ATPases have 2 components, CF(1) - the catalytic core - and CF(0) - the membrane proton channel. CF(1) has five subunits: alpha(3), beta(3), gamma(1), delta(1), epsilon(1). CF(0) has three main subunits: a, b and c.</text>
</comment>
<comment type="subcellular location">
    <subcellularLocation>
        <location evidence="1">Cell inner membrane</location>
        <topology evidence="1">Peripheral membrane protein</topology>
    </subcellularLocation>
</comment>
<comment type="similarity">
    <text evidence="1">Belongs to the ATPase epsilon chain family.</text>
</comment>
<accession>Q1CSD6</accession>
<feature type="chain" id="PRO_0000265823" description="ATP synthase epsilon chain">
    <location>
        <begin position="1"/>
        <end position="123"/>
    </location>
</feature>
<gene>
    <name evidence="1" type="primary">atpC</name>
    <name type="ordered locus">HPAG1_1069</name>
</gene>